<name>SYY_XANAC</name>
<comment type="function">
    <text evidence="1">Catalyzes the attachment of tyrosine to tRNA(Tyr) in a two-step reaction: tyrosine is first activated by ATP to form Tyr-AMP and then transferred to the acceptor end of tRNA(Tyr).</text>
</comment>
<comment type="catalytic activity">
    <reaction evidence="1">
        <text>tRNA(Tyr) + L-tyrosine + ATP = L-tyrosyl-tRNA(Tyr) + AMP + diphosphate + H(+)</text>
        <dbReference type="Rhea" id="RHEA:10220"/>
        <dbReference type="Rhea" id="RHEA-COMP:9706"/>
        <dbReference type="Rhea" id="RHEA-COMP:9707"/>
        <dbReference type="ChEBI" id="CHEBI:15378"/>
        <dbReference type="ChEBI" id="CHEBI:30616"/>
        <dbReference type="ChEBI" id="CHEBI:33019"/>
        <dbReference type="ChEBI" id="CHEBI:58315"/>
        <dbReference type="ChEBI" id="CHEBI:78442"/>
        <dbReference type="ChEBI" id="CHEBI:78536"/>
        <dbReference type="ChEBI" id="CHEBI:456215"/>
        <dbReference type="EC" id="6.1.1.1"/>
    </reaction>
</comment>
<comment type="subunit">
    <text evidence="1">Homodimer.</text>
</comment>
<comment type="subcellular location">
    <subcellularLocation>
        <location evidence="1">Cytoplasm</location>
    </subcellularLocation>
</comment>
<comment type="similarity">
    <text evidence="1">Belongs to the class-I aminoacyl-tRNA synthetase family. TyrS type 2 subfamily.</text>
</comment>
<sequence length="403" mass="44331">MTTIEESLALIGRGTEEILKLDQLQARLATGKPLRVKAGFDPTAPDLHLGHTVLLNKMRQFQQLGHQVIFLIGDFTGMIGDPSGKNATRKPLSREDVLANARTYEEQVFKILDRERTEVRFNSEWFGQMSAADMIKLSAQHTVARMLERDDFAKRFGSQQPIAIHEFLYPLVQGYDSVALKADVELGGTDQKFNLLMGRGLQEHYGQAPQIVLTMPLLEGLDGVAKMSKSLGNYIGINEPAIDIVTKTMKIGDALTWRWIDLLSFDISMAEAARLKEEVASGELHPREVKLRLARELATRFHDAATAEQAIAGWHAVVTGQGDTGLLPLQEVVVPAEGLRLAGLLTAAGLTPSNSEATRKLKERAVKIDGEVVEDPGRVFTQGFEGVIQVGKRNFARVSLVTG</sequence>
<accession>Q8PFT1</accession>
<reference key="1">
    <citation type="journal article" date="2002" name="Nature">
        <title>Comparison of the genomes of two Xanthomonas pathogens with differing host specificities.</title>
        <authorList>
            <person name="da Silva A.C.R."/>
            <person name="Ferro J.A."/>
            <person name="Reinach F.C."/>
            <person name="Farah C.S."/>
            <person name="Furlan L.R."/>
            <person name="Quaggio R.B."/>
            <person name="Monteiro-Vitorello C.B."/>
            <person name="Van Sluys M.A."/>
            <person name="Almeida N.F. Jr."/>
            <person name="Alves L.M.C."/>
            <person name="do Amaral A.M."/>
            <person name="Bertolini M.C."/>
            <person name="Camargo L.E.A."/>
            <person name="Camarotte G."/>
            <person name="Cannavan F."/>
            <person name="Cardozo J."/>
            <person name="Chambergo F."/>
            <person name="Ciapina L.P."/>
            <person name="Cicarelli R.M.B."/>
            <person name="Coutinho L.L."/>
            <person name="Cursino-Santos J.R."/>
            <person name="El-Dorry H."/>
            <person name="Faria J.B."/>
            <person name="Ferreira A.J.S."/>
            <person name="Ferreira R.C.C."/>
            <person name="Ferro M.I.T."/>
            <person name="Formighieri E.F."/>
            <person name="Franco M.C."/>
            <person name="Greggio C.C."/>
            <person name="Gruber A."/>
            <person name="Katsuyama A.M."/>
            <person name="Kishi L.T."/>
            <person name="Leite R.P."/>
            <person name="Lemos E.G.M."/>
            <person name="Lemos M.V.F."/>
            <person name="Locali E.C."/>
            <person name="Machado M.A."/>
            <person name="Madeira A.M.B.N."/>
            <person name="Martinez-Rossi N.M."/>
            <person name="Martins E.C."/>
            <person name="Meidanis J."/>
            <person name="Menck C.F.M."/>
            <person name="Miyaki C.Y."/>
            <person name="Moon D.H."/>
            <person name="Moreira L.M."/>
            <person name="Novo M.T.M."/>
            <person name="Okura V.K."/>
            <person name="Oliveira M.C."/>
            <person name="Oliveira V.R."/>
            <person name="Pereira H.A."/>
            <person name="Rossi A."/>
            <person name="Sena J.A.D."/>
            <person name="Silva C."/>
            <person name="de Souza R.F."/>
            <person name="Spinola L.A.F."/>
            <person name="Takita M.A."/>
            <person name="Tamura R.E."/>
            <person name="Teixeira E.C."/>
            <person name="Tezza R.I.D."/>
            <person name="Trindade dos Santos M."/>
            <person name="Truffi D."/>
            <person name="Tsai S.M."/>
            <person name="White F.F."/>
            <person name="Setubal J.C."/>
            <person name="Kitajima J.P."/>
        </authorList>
    </citation>
    <scope>NUCLEOTIDE SEQUENCE [LARGE SCALE GENOMIC DNA]</scope>
    <source>
        <strain>306</strain>
    </source>
</reference>
<evidence type="ECO:0000255" key="1">
    <source>
        <dbReference type="HAMAP-Rule" id="MF_02007"/>
    </source>
</evidence>
<gene>
    <name evidence="1" type="primary">tyrS</name>
    <name type="ordered locus">XAC3896</name>
</gene>
<protein>
    <recommendedName>
        <fullName evidence="1">Tyrosine--tRNA ligase</fullName>
        <ecNumber evidence="1">6.1.1.1</ecNumber>
    </recommendedName>
    <alternativeName>
        <fullName evidence="1">Tyrosyl-tRNA synthetase</fullName>
        <shortName evidence="1">TyrRS</shortName>
    </alternativeName>
</protein>
<proteinExistence type="inferred from homology"/>
<dbReference type="EC" id="6.1.1.1" evidence="1"/>
<dbReference type="EMBL" id="AE008923">
    <property type="protein sequence ID" value="AAM38734.1"/>
    <property type="molecule type" value="Genomic_DNA"/>
</dbReference>
<dbReference type="RefSeq" id="WP_011052588.1">
    <property type="nucleotide sequence ID" value="NC_003919.1"/>
</dbReference>
<dbReference type="SMR" id="Q8PFT1"/>
<dbReference type="GeneID" id="66912915"/>
<dbReference type="KEGG" id="xac:XAC3897"/>
<dbReference type="eggNOG" id="COG0162">
    <property type="taxonomic scope" value="Bacteria"/>
</dbReference>
<dbReference type="HOGENOM" id="CLU_024003_5_0_6"/>
<dbReference type="Proteomes" id="UP000000576">
    <property type="component" value="Chromosome"/>
</dbReference>
<dbReference type="GO" id="GO:0005829">
    <property type="term" value="C:cytosol"/>
    <property type="evidence" value="ECO:0007669"/>
    <property type="project" value="TreeGrafter"/>
</dbReference>
<dbReference type="GO" id="GO:0005524">
    <property type="term" value="F:ATP binding"/>
    <property type="evidence" value="ECO:0007669"/>
    <property type="project" value="UniProtKB-UniRule"/>
</dbReference>
<dbReference type="GO" id="GO:0003723">
    <property type="term" value="F:RNA binding"/>
    <property type="evidence" value="ECO:0007669"/>
    <property type="project" value="UniProtKB-KW"/>
</dbReference>
<dbReference type="GO" id="GO:0004831">
    <property type="term" value="F:tyrosine-tRNA ligase activity"/>
    <property type="evidence" value="ECO:0007669"/>
    <property type="project" value="UniProtKB-UniRule"/>
</dbReference>
<dbReference type="GO" id="GO:0006437">
    <property type="term" value="P:tyrosyl-tRNA aminoacylation"/>
    <property type="evidence" value="ECO:0007669"/>
    <property type="project" value="UniProtKB-UniRule"/>
</dbReference>
<dbReference type="CDD" id="cd00165">
    <property type="entry name" value="S4"/>
    <property type="match status" value="1"/>
</dbReference>
<dbReference type="CDD" id="cd00805">
    <property type="entry name" value="TyrRS_core"/>
    <property type="match status" value="1"/>
</dbReference>
<dbReference type="FunFam" id="3.10.290.10:FF:000022">
    <property type="entry name" value="Tyrosine--tRNA ligase"/>
    <property type="match status" value="1"/>
</dbReference>
<dbReference type="FunFam" id="3.40.50.620:FF:000061">
    <property type="entry name" value="Tyrosine--tRNA ligase"/>
    <property type="match status" value="1"/>
</dbReference>
<dbReference type="Gene3D" id="3.40.50.620">
    <property type="entry name" value="HUPs"/>
    <property type="match status" value="1"/>
</dbReference>
<dbReference type="Gene3D" id="3.10.290.10">
    <property type="entry name" value="RNA-binding S4 domain"/>
    <property type="match status" value="1"/>
</dbReference>
<dbReference type="Gene3D" id="1.10.240.10">
    <property type="entry name" value="Tyrosyl-Transfer RNA Synthetase"/>
    <property type="match status" value="1"/>
</dbReference>
<dbReference type="HAMAP" id="MF_02007">
    <property type="entry name" value="Tyr_tRNA_synth_type2"/>
    <property type="match status" value="1"/>
</dbReference>
<dbReference type="InterPro" id="IPR001412">
    <property type="entry name" value="aa-tRNA-synth_I_CS"/>
</dbReference>
<dbReference type="InterPro" id="IPR002305">
    <property type="entry name" value="aa-tRNA-synth_Ic"/>
</dbReference>
<dbReference type="InterPro" id="IPR014729">
    <property type="entry name" value="Rossmann-like_a/b/a_fold"/>
</dbReference>
<dbReference type="InterPro" id="IPR002942">
    <property type="entry name" value="S4_RNA-bd"/>
</dbReference>
<dbReference type="InterPro" id="IPR036986">
    <property type="entry name" value="S4_RNA-bd_sf"/>
</dbReference>
<dbReference type="InterPro" id="IPR002307">
    <property type="entry name" value="Tyr-tRNA-ligase"/>
</dbReference>
<dbReference type="InterPro" id="IPR024088">
    <property type="entry name" value="Tyr-tRNA-ligase_bac-type"/>
</dbReference>
<dbReference type="InterPro" id="IPR024108">
    <property type="entry name" value="Tyr-tRNA-ligase_bac_2"/>
</dbReference>
<dbReference type="NCBIfam" id="TIGR00234">
    <property type="entry name" value="tyrS"/>
    <property type="match status" value="1"/>
</dbReference>
<dbReference type="PANTHER" id="PTHR11766:SF1">
    <property type="entry name" value="TYROSINE--TRNA LIGASE"/>
    <property type="match status" value="1"/>
</dbReference>
<dbReference type="PANTHER" id="PTHR11766">
    <property type="entry name" value="TYROSYL-TRNA SYNTHETASE"/>
    <property type="match status" value="1"/>
</dbReference>
<dbReference type="Pfam" id="PF00579">
    <property type="entry name" value="tRNA-synt_1b"/>
    <property type="match status" value="1"/>
</dbReference>
<dbReference type="PRINTS" id="PR01040">
    <property type="entry name" value="TRNASYNTHTYR"/>
</dbReference>
<dbReference type="SMART" id="SM00363">
    <property type="entry name" value="S4"/>
    <property type="match status" value="1"/>
</dbReference>
<dbReference type="SUPFAM" id="SSF55174">
    <property type="entry name" value="Alpha-L RNA-binding motif"/>
    <property type="match status" value="1"/>
</dbReference>
<dbReference type="SUPFAM" id="SSF52374">
    <property type="entry name" value="Nucleotidylyl transferase"/>
    <property type="match status" value="1"/>
</dbReference>
<dbReference type="PROSITE" id="PS00178">
    <property type="entry name" value="AA_TRNA_LIGASE_I"/>
    <property type="match status" value="1"/>
</dbReference>
<dbReference type="PROSITE" id="PS50889">
    <property type="entry name" value="S4"/>
    <property type="match status" value="1"/>
</dbReference>
<organism>
    <name type="scientific">Xanthomonas axonopodis pv. citri (strain 306)</name>
    <dbReference type="NCBI Taxonomy" id="190486"/>
    <lineage>
        <taxon>Bacteria</taxon>
        <taxon>Pseudomonadati</taxon>
        <taxon>Pseudomonadota</taxon>
        <taxon>Gammaproteobacteria</taxon>
        <taxon>Lysobacterales</taxon>
        <taxon>Lysobacteraceae</taxon>
        <taxon>Xanthomonas</taxon>
    </lineage>
</organism>
<feature type="chain" id="PRO_0000236781" description="Tyrosine--tRNA ligase">
    <location>
        <begin position="1"/>
        <end position="403"/>
    </location>
</feature>
<feature type="domain" description="S4 RNA-binding" evidence="1">
    <location>
        <begin position="339"/>
        <end position="400"/>
    </location>
</feature>
<feature type="short sequence motif" description="'HIGH' region">
    <location>
        <begin position="42"/>
        <end position="51"/>
    </location>
</feature>
<feature type="short sequence motif" description="'KMSKS' region">
    <location>
        <begin position="226"/>
        <end position="230"/>
    </location>
</feature>
<feature type="binding site" evidence="1">
    <location>
        <position position="229"/>
    </location>
    <ligand>
        <name>ATP</name>
        <dbReference type="ChEBI" id="CHEBI:30616"/>
    </ligand>
</feature>
<keyword id="KW-0030">Aminoacyl-tRNA synthetase</keyword>
<keyword id="KW-0067">ATP-binding</keyword>
<keyword id="KW-0963">Cytoplasm</keyword>
<keyword id="KW-0436">Ligase</keyword>
<keyword id="KW-0547">Nucleotide-binding</keyword>
<keyword id="KW-0648">Protein biosynthesis</keyword>
<keyword id="KW-0694">RNA-binding</keyword>